<dbReference type="EC" id="2.7.1.71" evidence="1"/>
<dbReference type="EMBL" id="AE004969">
    <property type="protein sequence ID" value="AAW88854.1"/>
    <property type="molecule type" value="Genomic_DNA"/>
</dbReference>
<dbReference type="RefSeq" id="WP_003687349.1">
    <property type="nucleotide sequence ID" value="NC_002946.2"/>
</dbReference>
<dbReference type="RefSeq" id="YP_207266.1">
    <property type="nucleotide sequence ID" value="NC_002946.2"/>
</dbReference>
<dbReference type="SMR" id="Q5FAD3"/>
<dbReference type="STRING" id="242231.NGO_0093"/>
<dbReference type="KEGG" id="ngo:NGO_0093"/>
<dbReference type="PATRIC" id="fig|242231.10.peg.121"/>
<dbReference type="HOGENOM" id="CLU_057607_2_2_4"/>
<dbReference type="UniPathway" id="UPA00053">
    <property type="reaction ID" value="UER00088"/>
</dbReference>
<dbReference type="Proteomes" id="UP000000535">
    <property type="component" value="Chromosome"/>
</dbReference>
<dbReference type="GO" id="GO:0005829">
    <property type="term" value="C:cytosol"/>
    <property type="evidence" value="ECO:0007669"/>
    <property type="project" value="TreeGrafter"/>
</dbReference>
<dbReference type="GO" id="GO:0005524">
    <property type="term" value="F:ATP binding"/>
    <property type="evidence" value="ECO:0007669"/>
    <property type="project" value="UniProtKB-UniRule"/>
</dbReference>
<dbReference type="GO" id="GO:0000287">
    <property type="term" value="F:magnesium ion binding"/>
    <property type="evidence" value="ECO:0007669"/>
    <property type="project" value="UniProtKB-UniRule"/>
</dbReference>
<dbReference type="GO" id="GO:0004765">
    <property type="term" value="F:shikimate kinase activity"/>
    <property type="evidence" value="ECO:0007669"/>
    <property type="project" value="UniProtKB-UniRule"/>
</dbReference>
<dbReference type="GO" id="GO:0008652">
    <property type="term" value="P:amino acid biosynthetic process"/>
    <property type="evidence" value="ECO:0007669"/>
    <property type="project" value="UniProtKB-KW"/>
</dbReference>
<dbReference type="GO" id="GO:0009073">
    <property type="term" value="P:aromatic amino acid family biosynthetic process"/>
    <property type="evidence" value="ECO:0007669"/>
    <property type="project" value="UniProtKB-KW"/>
</dbReference>
<dbReference type="GO" id="GO:0009423">
    <property type="term" value="P:chorismate biosynthetic process"/>
    <property type="evidence" value="ECO:0007669"/>
    <property type="project" value="UniProtKB-UniRule"/>
</dbReference>
<dbReference type="CDD" id="cd00464">
    <property type="entry name" value="SK"/>
    <property type="match status" value="1"/>
</dbReference>
<dbReference type="FunFam" id="3.40.50.300:FF:002237">
    <property type="entry name" value="Shikimate kinase"/>
    <property type="match status" value="1"/>
</dbReference>
<dbReference type="Gene3D" id="3.40.50.300">
    <property type="entry name" value="P-loop containing nucleotide triphosphate hydrolases"/>
    <property type="match status" value="1"/>
</dbReference>
<dbReference type="HAMAP" id="MF_00109">
    <property type="entry name" value="Shikimate_kinase"/>
    <property type="match status" value="1"/>
</dbReference>
<dbReference type="InterPro" id="IPR027417">
    <property type="entry name" value="P-loop_NTPase"/>
</dbReference>
<dbReference type="InterPro" id="IPR031322">
    <property type="entry name" value="Shikimate/glucono_kinase"/>
</dbReference>
<dbReference type="InterPro" id="IPR000623">
    <property type="entry name" value="Shikimate_kinase/TSH1"/>
</dbReference>
<dbReference type="InterPro" id="IPR023000">
    <property type="entry name" value="Shikimate_kinase_CS"/>
</dbReference>
<dbReference type="PANTHER" id="PTHR21087">
    <property type="entry name" value="SHIKIMATE KINASE"/>
    <property type="match status" value="1"/>
</dbReference>
<dbReference type="PANTHER" id="PTHR21087:SF16">
    <property type="entry name" value="SHIKIMATE KINASE 1, CHLOROPLASTIC"/>
    <property type="match status" value="1"/>
</dbReference>
<dbReference type="Pfam" id="PF01202">
    <property type="entry name" value="SKI"/>
    <property type="match status" value="1"/>
</dbReference>
<dbReference type="PRINTS" id="PR01100">
    <property type="entry name" value="SHIKIMTKNASE"/>
</dbReference>
<dbReference type="SUPFAM" id="SSF52540">
    <property type="entry name" value="P-loop containing nucleoside triphosphate hydrolases"/>
    <property type="match status" value="1"/>
</dbReference>
<dbReference type="PROSITE" id="PS01128">
    <property type="entry name" value="SHIKIMATE_KINASE"/>
    <property type="match status" value="1"/>
</dbReference>
<gene>
    <name evidence="1" type="primary">aroK</name>
    <name type="ordered locus">NGO_0093</name>
</gene>
<keyword id="KW-0028">Amino-acid biosynthesis</keyword>
<keyword id="KW-0057">Aromatic amino acid biosynthesis</keyword>
<keyword id="KW-0067">ATP-binding</keyword>
<keyword id="KW-0963">Cytoplasm</keyword>
<keyword id="KW-0418">Kinase</keyword>
<keyword id="KW-0460">Magnesium</keyword>
<keyword id="KW-0479">Metal-binding</keyword>
<keyword id="KW-0547">Nucleotide-binding</keyword>
<keyword id="KW-1185">Reference proteome</keyword>
<keyword id="KW-0808">Transferase</keyword>
<organism>
    <name type="scientific">Neisseria gonorrhoeae (strain ATCC 700825 / FA 1090)</name>
    <dbReference type="NCBI Taxonomy" id="242231"/>
    <lineage>
        <taxon>Bacteria</taxon>
        <taxon>Pseudomonadati</taxon>
        <taxon>Pseudomonadota</taxon>
        <taxon>Betaproteobacteria</taxon>
        <taxon>Neisseriales</taxon>
        <taxon>Neisseriaceae</taxon>
        <taxon>Neisseria</taxon>
    </lineage>
</organism>
<name>AROK_NEIG1</name>
<sequence>MKNFNGKLILIGLMGAGKTTLGRQMAQRLDYRFYDSDHEIAAAAGVPIPTIFEMEGEQGFRSRETAILKKLIVLPHIVLSTGGGAVLKEENRALIRKSGTVVYLHAPPETLLERTRCDNSRPLLQVADPLAKLRELYAARDPVYRQTADFTVESANCRETVQTLLKRLSR</sequence>
<proteinExistence type="inferred from homology"/>
<feature type="chain" id="PRO_0000237897" description="Shikimate kinase">
    <location>
        <begin position="1"/>
        <end position="170"/>
    </location>
</feature>
<feature type="binding site" evidence="1">
    <location>
        <begin position="15"/>
        <end position="20"/>
    </location>
    <ligand>
        <name>ATP</name>
        <dbReference type="ChEBI" id="CHEBI:30616"/>
    </ligand>
</feature>
<feature type="binding site" evidence="1">
    <location>
        <position position="19"/>
    </location>
    <ligand>
        <name>Mg(2+)</name>
        <dbReference type="ChEBI" id="CHEBI:18420"/>
    </ligand>
</feature>
<feature type="binding site" evidence="1">
    <location>
        <position position="37"/>
    </location>
    <ligand>
        <name>substrate</name>
    </ligand>
</feature>
<feature type="binding site" evidence="1">
    <location>
        <position position="61"/>
    </location>
    <ligand>
        <name>substrate</name>
    </ligand>
</feature>
<feature type="binding site" evidence="1">
    <location>
        <position position="83"/>
    </location>
    <ligand>
        <name>substrate</name>
    </ligand>
</feature>
<feature type="binding site" evidence="1">
    <location>
        <position position="121"/>
    </location>
    <ligand>
        <name>ATP</name>
        <dbReference type="ChEBI" id="CHEBI:30616"/>
    </ligand>
</feature>
<feature type="binding site" evidence="1">
    <location>
        <position position="140"/>
    </location>
    <ligand>
        <name>substrate</name>
    </ligand>
</feature>
<evidence type="ECO:0000255" key="1">
    <source>
        <dbReference type="HAMAP-Rule" id="MF_00109"/>
    </source>
</evidence>
<accession>Q5FAD3</accession>
<comment type="function">
    <text evidence="1">Catalyzes the specific phosphorylation of the 3-hydroxyl group of shikimic acid using ATP as a cosubstrate.</text>
</comment>
<comment type="catalytic activity">
    <reaction evidence="1">
        <text>shikimate + ATP = 3-phosphoshikimate + ADP + H(+)</text>
        <dbReference type="Rhea" id="RHEA:13121"/>
        <dbReference type="ChEBI" id="CHEBI:15378"/>
        <dbReference type="ChEBI" id="CHEBI:30616"/>
        <dbReference type="ChEBI" id="CHEBI:36208"/>
        <dbReference type="ChEBI" id="CHEBI:145989"/>
        <dbReference type="ChEBI" id="CHEBI:456216"/>
        <dbReference type="EC" id="2.7.1.71"/>
    </reaction>
</comment>
<comment type="cofactor">
    <cofactor evidence="1">
        <name>Mg(2+)</name>
        <dbReference type="ChEBI" id="CHEBI:18420"/>
    </cofactor>
    <text evidence="1">Binds 1 Mg(2+) ion per subunit.</text>
</comment>
<comment type="pathway">
    <text evidence="1">Metabolic intermediate biosynthesis; chorismate biosynthesis; chorismate from D-erythrose 4-phosphate and phosphoenolpyruvate: step 5/7.</text>
</comment>
<comment type="subunit">
    <text evidence="1">Monomer.</text>
</comment>
<comment type="subcellular location">
    <subcellularLocation>
        <location evidence="1">Cytoplasm</location>
    </subcellularLocation>
</comment>
<comment type="similarity">
    <text evidence="1">Belongs to the shikimate kinase family.</text>
</comment>
<protein>
    <recommendedName>
        <fullName evidence="1">Shikimate kinase</fullName>
        <shortName evidence="1">SK</shortName>
        <ecNumber evidence="1">2.7.1.71</ecNumber>
    </recommendedName>
</protein>
<reference key="1">
    <citation type="submission" date="2003-03" db="EMBL/GenBank/DDBJ databases">
        <title>The complete genome sequence of Neisseria gonorrhoeae.</title>
        <authorList>
            <person name="Lewis L.A."/>
            <person name="Gillaspy A.F."/>
            <person name="McLaughlin R.E."/>
            <person name="Gipson M."/>
            <person name="Ducey T.F."/>
            <person name="Ownbey T."/>
            <person name="Hartman K."/>
            <person name="Nydick C."/>
            <person name="Carson M.B."/>
            <person name="Vaughn J."/>
            <person name="Thomson C."/>
            <person name="Song L."/>
            <person name="Lin S."/>
            <person name="Yuan X."/>
            <person name="Najar F."/>
            <person name="Zhan M."/>
            <person name="Ren Q."/>
            <person name="Zhu H."/>
            <person name="Qi S."/>
            <person name="Kenton S.M."/>
            <person name="Lai H."/>
            <person name="White J.D."/>
            <person name="Clifton S."/>
            <person name="Roe B.A."/>
            <person name="Dyer D.W."/>
        </authorList>
    </citation>
    <scope>NUCLEOTIDE SEQUENCE [LARGE SCALE GENOMIC DNA]</scope>
    <source>
        <strain>ATCC 700825 / FA 1090</strain>
    </source>
</reference>